<protein>
    <recommendedName>
        <fullName evidence="5">Aquaporin-8</fullName>
        <shortName evidence="5">AQP-8</shortName>
    </recommendedName>
</protein>
<dbReference type="EMBL" id="JN378743">
    <property type="protein sequence ID" value="AEP14562.1"/>
    <property type="molecule type" value="mRNA"/>
</dbReference>
<dbReference type="SMR" id="G5CTG5"/>
<dbReference type="GlyCosmos" id="G5CTG5">
    <property type="glycosylation" value="2 sites, No reported glycans"/>
</dbReference>
<dbReference type="GO" id="GO:0016323">
    <property type="term" value="C:basolateral plasma membrane"/>
    <property type="evidence" value="ECO:0007669"/>
    <property type="project" value="TreeGrafter"/>
</dbReference>
<dbReference type="GO" id="GO:0015254">
    <property type="term" value="F:glycerol channel activity"/>
    <property type="evidence" value="ECO:0007669"/>
    <property type="project" value="TreeGrafter"/>
</dbReference>
<dbReference type="GO" id="GO:0015250">
    <property type="term" value="F:water channel activity"/>
    <property type="evidence" value="ECO:0007669"/>
    <property type="project" value="TreeGrafter"/>
</dbReference>
<dbReference type="Gene3D" id="1.20.1080.10">
    <property type="entry name" value="Glycerol uptake facilitator protein"/>
    <property type="match status" value="1"/>
</dbReference>
<dbReference type="InterPro" id="IPR023271">
    <property type="entry name" value="Aquaporin-like"/>
</dbReference>
<dbReference type="InterPro" id="IPR000425">
    <property type="entry name" value="MIP"/>
</dbReference>
<dbReference type="InterPro" id="IPR050363">
    <property type="entry name" value="MIP/Aquaporin"/>
</dbReference>
<dbReference type="PANTHER" id="PTHR43829">
    <property type="entry name" value="AQUAPORIN OR AQUAGLYCEROPORIN RELATED"/>
    <property type="match status" value="1"/>
</dbReference>
<dbReference type="PANTHER" id="PTHR43829:SF9">
    <property type="entry name" value="AQUAPORIN-9"/>
    <property type="match status" value="1"/>
</dbReference>
<dbReference type="Pfam" id="PF00230">
    <property type="entry name" value="MIP"/>
    <property type="match status" value="1"/>
</dbReference>
<dbReference type="PRINTS" id="PR02019">
    <property type="entry name" value="AQUAPORIN7"/>
</dbReference>
<dbReference type="PRINTS" id="PR00783">
    <property type="entry name" value="MINTRINSICP"/>
</dbReference>
<dbReference type="SUPFAM" id="SSF81338">
    <property type="entry name" value="Aquaporin-like"/>
    <property type="match status" value="1"/>
</dbReference>
<organism>
    <name type="scientific">Milnesium tardigradum</name>
    <name type="common">Water bear</name>
    <name type="synonym">Tardigrade</name>
    <dbReference type="NCBI Taxonomy" id="46460"/>
    <lineage>
        <taxon>Eukaryota</taxon>
        <taxon>Metazoa</taxon>
        <taxon>Ecdysozoa</taxon>
        <taxon>Tardigrada</taxon>
        <taxon>Eutardigrada</taxon>
        <taxon>Apochela</taxon>
        <taxon>Milnesiidae</taxon>
        <taxon>Milnesium</taxon>
    </lineage>
</organism>
<reference key="1">
    <citation type="journal article" date="2013" name="Bioinf. Biol. Insights">
        <title>The aquaporin channel repertoire of the tardigrade Milnesium tardigradum.</title>
        <authorList>
            <person name="Grohme M.A."/>
            <person name="Mali B."/>
            <person name="Welnicz W."/>
            <person name="Michel S."/>
            <person name="Schill R.O."/>
            <person name="Frohme M."/>
        </authorList>
    </citation>
    <scope>NUCLEOTIDE SEQUENCE [MRNA]</scope>
    <scope>DOMAIN</scope>
    <scope>INDUCTION</scope>
</reference>
<keyword id="KW-1003">Cell membrane</keyword>
<keyword id="KW-0325">Glycoprotein</keyword>
<keyword id="KW-0472">Membrane</keyword>
<keyword id="KW-0677">Repeat</keyword>
<keyword id="KW-0346">Stress response</keyword>
<keyword id="KW-0812">Transmembrane</keyword>
<keyword id="KW-1133">Transmembrane helix</keyword>
<keyword id="KW-0813">Transport</keyword>
<gene>
    <name evidence="5" type="primary">AQP8</name>
</gene>
<comment type="function">
    <text evidence="7">Aquaglyceroporin that may modulate the water content and osmolytes during anhydrobiosis (PubMed:23761966).</text>
</comment>
<comment type="subcellular location">
    <subcellularLocation>
        <location evidence="6">Cell membrane</location>
        <topology evidence="1">Multi-pass membrane protein</topology>
    </subcellularLocation>
</comment>
<comment type="induction">
    <text evidence="4">Transcript abundance is low but expression is slightly up-regulated in the inactive stage (during anhydrobiois) (PubMed:23761966).</text>
</comment>
<comment type="domain">
    <text evidence="7">Aquaporins contain two tandem repeats each containing three membrane-spanning domains and a pore-forming loop with the signature motif Asn-Pro-Ala (NPA).</text>
</comment>
<comment type="similarity">
    <text evidence="6">Belongs to the MIP/aquaporin (TC 1.A.8) family.</text>
</comment>
<sequence length="342" mass="37279">MSTAESRNHYKEVPTIEHYSEAIGITNRKKMDWRGWLRKSTLVRSQLIRGCMAEFLAVFVLMVFIEGSAATAIFTNRRQDILFGSISSGLGVAMAVYVAGGVSGAFLNPAVALAFAVLGKLSWKNCIFYMISQYLAAFVASCTMFAYLYEALNNFDGGERQMFGPNGTAHIWSTYPQPFLSPHTAFADQVFCTAILLIVVLAMCDSKNWKPHNGFLPIAIGLLIITISCTLSYNAGAAMNPSRDLAPRFFSYLAGYGTEPFGVKGYTWFFVPVLGSHCGAIIGGAIYQLFIGGQWPDDTSDTNSVSSMSYNEDNSTLTKRKQVSNIVHDSKGAKGSSTAPVN</sequence>
<proteinExistence type="evidence at transcript level"/>
<name>AQP8_MILTA</name>
<evidence type="ECO:0000255" key="1"/>
<evidence type="ECO:0000255" key="2">
    <source>
        <dbReference type="PROSITE-ProRule" id="PRU00498"/>
    </source>
</evidence>
<evidence type="ECO:0000256" key="3">
    <source>
        <dbReference type="SAM" id="MobiDB-lite"/>
    </source>
</evidence>
<evidence type="ECO:0000269" key="4">
    <source>
    </source>
</evidence>
<evidence type="ECO:0000303" key="5">
    <source>
    </source>
</evidence>
<evidence type="ECO:0000305" key="6"/>
<evidence type="ECO:0000305" key="7">
    <source>
    </source>
</evidence>
<accession>G5CTG5</accession>
<feature type="chain" id="PRO_0000440209" description="Aquaporin-8">
    <location>
        <begin position="1"/>
        <end position="342"/>
    </location>
</feature>
<feature type="transmembrane region" description="Helical" evidence="1">
    <location>
        <begin position="55"/>
        <end position="75"/>
    </location>
</feature>
<feature type="transmembrane region" description="Helical" evidence="1">
    <location>
        <begin position="98"/>
        <end position="118"/>
    </location>
</feature>
<feature type="transmembrane region" description="Helical" evidence="1">
    <location>
        <begin position="126"/>
        <end position="146"/>
    </location>
</feature>
<feature type="transmembrane region" description="Helical" evidence="1">
    <location>
        <begin position="184"/>
        <end position="204"/>
    </location>
</feature>
<feature type="transmembrane region" description="Helical" evidence="1">
    <location>
        <begin position="215"/>
        <end position="235"/>
    </location>
</feature>
<feature type="transmembrane region" description="Helical" evidence="1">
    <location>
        <begin position="266"/>
        <end position="286"/>
    </location>
</feature>
<feature type="region of interest" description="Disordered" evidence="3">
    <location>
        <begin position="302"/>
        <end position="342"/>
    </location>
</feature>
<feature type="short sequence motif" description="NPA 1">
    <location>
        <begin position="108"/>
        <end position="110"/>
    </location>
</feature>
<feature type="short sequence motif" description="NPA 2">
    <location>
        <begin position="240"/>
        <end position="242"/>
    </location>
</feature>
<feature type="compositionally biased region" description="Polar residues" evidence="3">
    <location>
        <begin position="302"/>
        <end position="327"/>
    </location>
</feature>
<feature type="glycosylation site" description="N-linked (GlcNAc...) asparagine" evidence="2">
    <location>
        <position position="166"/>
    </location>
</feature>
<feature type="glycosylation site" description="N-linked (GlcNAc...) asparagine" evidence="2">
    <location>
        <position position="314"/>
    </location>
</feature>